<evidence type="ECO:0000255" key="1"/>
<evidence type="ECO:0000269" key="2">
    <source>
    </source>
</evidence>
<evidence type="ECO:0000269" key="3">
    <source>
    </source>
</evidence>
<evidence type="ECO:0000269" key="4">
    <source>
    </source>
</evidence>
<evidence type="ECO:0000269" key="5">
    <source>
    </source>
</evidence>
<evidence type="ECO:0000269" key="6">
    <source>
    </source>
</evidence>
<evidence type="ECO:0000305" key="7"/>
<evidence type="ECO:0007744" key="8">
    <source>
        <dbReference type="PDB" id="3ULQ"/>
    </source>
</evidence>
<evidence type="ECO:0007744" key="9">
    <source>
        <dbReference type="PDB" id="4I9C"/>
    </source>
</evidence>
<evidence type="ECO:0007744" key="10">
    <source>
        <dbReference type="PDB" id="4I9E"/>
    </source>
</evidence>
<evidence type="ECO:0007829" key="11">
    <source>
        <dbReference type="PDB" id="3ULQ"/>
    </source>
</evidence>
<evidence type="ECO:0007829" key="12">
    <source>
        <dbReference type="PDB" id="4I9E"/>
    </source>
</evidence>
<name>RAPF_BACSU</name>
<comment type="function">
    <text evidence="2 3 5 6">Involved in the regulation of genetic competence development (PubMed:15968044, PubMed:16816200). Inhibits the activity of ComA, a transcriptional factor that regulates the development of genetic competence (PubMed:15968044, PubMed:16816200, PubMed:22215984, PubMed:23526880). Acts by binding to ComA, leading to the inhibition of its DNA-binding activity (PubMed:15968044, PubMed:22215984, PubMed:23526880). May also affect transcription independently of ComA (PubMed:16816200).</text>
</comment>
<comment type="activity regulation">
    <text evidence="2 3 5 6">Inhibited by PhrF, which prevents RapF-ComA interaction (PubMed:15968044, PubMed:16816200, PubMed:22215984, PubMed:23526880). Interaction with PhrF induces a conformational change in RapF, which is propagated to the ComA binding site and causes the dissociation of ComA from RapF (PubMed:22215984, PubMed:23526880).</text>
</comment>
<comment type="subunit">
    <text evidence="2 5 6">Monomer (PubMed:22215984). Is monomeric either alone or in complex with PhrF (PubMed:22215984). Interacts specifically with the C-terminal DNA-binding domain of ComA (PubMed:15968044, PubMed:22215984). Interacts with PhrF (PubMed:15968044, PubMed:22215984, PubMed:23526880).</text>
</comment>
<comment type="interaction">
    <interactant intactId="EBI-15961797">
        <id>P71002</id>
    </interactant>
    <interactant intactId="EBI-6418022">
        <id>P14204</id>
        <label>comA</label>
    </interactant>
    <organismsDiffer>false</organismsDiffer>
    <experiments>5</experiments>
</comment>
<comment type="interaction">
    <interactant intactId="EBI-15961797">
        <id>P71002</id>
    </interactant>
    <interactant intactId="EBI-15961814">
        <id>P71001</id>
        <label>phrF</label>
    </interactant>
    <organismsDiffer>false</organismsDiffer>
    <experiments>2</experiments>
</comment>
<comment type="subcellular location">
    <subcellularLocation>
        <location evidence="7">Cytoplasm</location>
    </subcellularLocation>
</comment>
<comment type="induction">
    <text evidence="2">Part of the rapF-phrF operon, which is controlled by ComA.</text>
</comment>
<comment type="domain">
    <text evidence="5 6">Contains a small N-terminal 3-helix bundle domain and a large C-terminal TPR domain, connected by a linker region (PubMed:22215984, PubMed:23526880). The 3-helix bundle domain and the linker region form the ComA binding surface (PubMed:22215984, PubMed:23526880). A RapF surface mimics DNA to block ComA binding to its target promoters (PubMed:22215984). Interacts with PhrF via the TPR domain (PubMed:23526880).</text>
</comment>
<comment type="disruption phenotype">
    <text evidence="3">Deletion of the gene has no detectable effect on expression of the srfA operon.</text>
</comment>
<comment type="miscellaneous">
    <text evidence="2">RapF and PhrF pair of proteins acts synergistically with RapC and CSF in the overall regulation of the ComA transcription factor.</text>
</comment>
<comment type="similarity">
    <text evidence="7">Belongs to the Rap family.</text>
</comment>
<proteinExistence type="evidence at protein level"/>
<protein>
    <recommendedName>
        <fullName evidence="7">Regulatory protein RapF</fullName>
    </recommendedName>
</protein>
<feature type="chain" id="PRO_0000106440" description="Regulatory protein RapF">
    <location>
        <begin position="1"/>
        <end position="381"/>
    </location>
</feature>
<feature type="repeat" description="TPR 1" evidence="1">
    <location>
        <begin position="101"/>
        <end position="137"/>
    </location>
</feature>
<feature type="repeat" description="TPR 2" evidence="1">
    <location>
        <begin position="148"/>
        <end position="181"/>
    </location>
</feature>
<feature type="repeat" description="TPR 3" evidence="1">
    <location>
        <begin position="182"/>
        <end position="215"/>
    </location>
</feature>
<feature type="repeat" description="TPR 4" evidence="1">
    <location>
        <begin position="222"/>
        <end position="255"/>
    </location>
</feature>
<feature type="repeat" description="TPR 5" evidence="1">
    <location>
        <begin position="262"/>
        <end position="295"/>
    </location>
</feature>
<feature type="repeat" description="TPR 6" evidence="1">
    <location>
        <begin position="337"/>
        <end position="370"/>
    </location>
</feature>
<feature type="binding site" evidence="8">
    <location>
        <position position="40"/>
    </location>
    <ligand>
        <name>Mn(2+)</name>
        <dbReference type="ChEBI" id="CHEBI:29035"/>
    </ligand>
</feature>
<feature type="binding site" evidence="8">
    <location>
        <position position="43"/>
    </location>
    <ligand>
        <name>Mn(2+)</name>
        <dbReference type="ChEBI" id="CHEBI:29035"/>
    </ligand>
</feature>
<feature type="binding site" evidence="8">
    <location>
        <position position="45"/>
    </location>
    <ligand>
        <name>Mn(2+)</name>
        <dbReference type="ChEBI" id="CHEBI:29035"/>
    </ligand>
</feature>
<feature type="mutagenesis site" description="Loss of ComA binding activity." evidence="5">
    <original>F</original>
    <variation>A</variation>
    <location>
        <position position="24"/>
    </location>
</feature>
<feature type="mutagenesis site" description="Significant decrease in ComA binding activity." evidence="5">
    <original>P</original>
    <variation>A</variation>
    <location>
        <position position="27"/>
    </location>
</feature>
<feature type="mutagenesis site" description="Loss of ComA binding activity." evidence="5">
    <original>D</original>
    <variation>A</variation>
    <location>
        <position position="28"/>
    </location>
</feature>
<feature type="mutagenesis site" description="Can dephosphorylate Spo0F." evidence="4">
    <original>H</original>
    <variation>L</variation>
    <location>
        <position position="50"/>
    </location>
</feature>
<feature type="mutagenesis site" description="Loss of ComA binding activity." evidence="5">
    <original>L</original>
    <variation>A</variation>
    <location>
        <position position="67"/>
    </location>
</feature>
<feature type="mutagenesis site" description="Significant decrease in ComA binding activity." evidence="5">
    <original>E</original>
    <variation>A</variation>
    <location>
        <position position="71"/>
    </location>
</feature>
<feature type="mutagenesis site" description="Significant decrease in ComA binding activity." evidence="5">
    <original>Q</original>
    <variation>A</variation>
    <location>
        <position position="78"/>
    </location>
</feature>
<feature type="mutagenesis site" description="Can bind ComA but is insensitive to PhrF inhibition." evidence="6">
    <original>D</original>
    <variation>A</variation>
    <location>
        <position position="194"/>
    </location>
</feature>
<feature type="mutagenesis site" description="Completely suppresses expression from srfA promoter and is insensitive to PhrF inhibition." evidence="5">
    <original>D</original>
    <variation>N</variation>
    <location>
        <position position="194"/>
    </location>
</feature>
<feature type="mutagenesis site" description="Can bind ComA but is insensitive to PhrF inhibition." evidence="6">
    <original>N</original>
    <variation>A</variation>
    <location>
        <position position="227"/>
    </location>
</feature>
<feature type="mutagenesis site" description="Can bind ComA. Interacts with RapF, but not with PhrC." evidence="6">
    <original>E</original>
    <variation>A</variation>
    <location>
        <position position="303"/>
    </location>
</feature>
<feature type="mutagenesis site" description="Can bind ComA. Interacts with RapF, and can also interact with PhrC." evidence="6">
    <original>E</original>
    <variation>K</variation>
    <location>
        <position position="303"/>
    </location>
</feature>
<feature type="helix" evidence="11">
    <location>
        <begin position="7"/>
        <end position="22"/>
    </location>
</feature>
<feature type="helix" evidence="11">
    <location>
        <begin position="26"/>
        <end position="41"/>
    </location>
</feature>
<feature type="helix" evidence="11">
    <location>
        <begin position="47"/>
        <end position="67"/>
    </location>
</feature>
<feature type="helix" evidence="11">
    <location>
        <begin position="68"/>
        <end position="72"/>
    </location>
</feature>
<feature type="helix" evidence="11">
    <location>
        <begin position="75"/>
        <end position="77"/>
    </location>
</feature>
<feature type="helix" evidence="11">
    <location>
        <begin position="81"/>
        <end position="91"/>
    </location>
</feature>
<feature type="helix" evidence="11">
    <location>
        <begin position="93"/>
        <end position="113"/>
    </location>
</feature>
<feature type="helix" evidence="11">
    <location>
        <begin position="117"/>
        <end position="128"/>
    </location>
</feature>
<feature type="helix" evidence="11">
    <location>
        <begin position="129"/>
        <end position="133"/>
    </location>
</feature>
<feature type="helix" evidence="11">
    <location>
        <begin position="137"/>
        <end position="153"/>
    </location>
</feature>
<feature type="helix" evidence="11">
    <location>
        <begin position="157"/>
        <end position="172"/>
    </location>
</feature>
<feature type="strand" evidence="12">
    <location>
        <begin position="174"/>
        <end position="176"/>
    </location>
</feature>
<feature type="helix" evidence="11">
    <location>
        <begin position="178"/>
        <end position="194"/>
    </location>
</feature>
<feature type="helix" evidence="11">
    <location>
        <begin position="198"/>
        <end position="214"/>
    </location>
</feature>
<feature type="helix" evidence="11">
    <location>
        <begin position="218"/>
        <end position="234"/>
    </location>
</feature>
<feature type="helix" evidence="11">
    <location>
        <begin position="238"/>
        <end position="254"/>
    </location>
</feature>
<feature type="helix" evidence="11">
    <location>
        <begin position="258"/>
        <end position="260"/>
    </location>
</feature>
<feature type="helix" evidence="11">
    <location>
        <begin position="261"/>
        <end position="274"/>
    </location>
</feature>
<feature type="helix" evidence="11">
    <location>
        <begin position="278"/>
        <end position="295"/>
    </location>
</feature>
<feature type="helix" evidence="11">
    <location>
        <begin position="298"/>
        <end position="311"/>
    </location>
</feature>
<feature type="helix" evidence="11">
    <location>
        <begin position="317"/>
        <end position="329"/>
    </location>
</feature>
<feature type="helix" evidence="11">
    <location>
        <begin position="333"/>
        <end position="349"/>
    </location>
</feature>
<feature type="helix" evidence="11">
    <location>
        <begin position="353"/>
        <end position="367"/>
    </location>
</feature>
<accession>P71002</accession>
<reference key="1">
    <citation type="journal article" date="1997" name="Microbiology">
        <title>The Bacillus subtilis genome from gerBC (311 degrees) to licR (334 degrees).</title>
        <authorList>
            <person name="Presecan E."/>
            <person name="Moszer I."/>
            <person name="Boursier L."/>
            <person name="Cruz Ramos H."/>
            <person name="De La Fuente V."/>
            <person name="Hullo M.-F."/>
            <person name="Lelong C."/>
            <person name="Schleich S."/>
            <person name="Sekowska A."/>
            <person name="Song B.H."/>
            <person name="Villani G."/>
            <person name="Kunst F."/>
            <person name="Danchin A."/>
            <person name="Glaser P."/>
        </authorList>
    </citation>
    <scope>NUCLEOTIDE SEQUENCE [GENOMIC DNA]</scope>
    <source>
        <strain>168</strain>
    </source>
</reference>
<reference key="2">
    <citation type="journal article" date="1997" name="Nature">
        <title>The complete genome sequence of the Gram-positive bacterium Bacillus subtilis.</title>
        <authorList>
            <person name="Kunst F."/>
            <person name="Ogasawara N."/>
            <person name="Moszer I."/>
            <person name="Albertini A.M."/>
            <person name="Alloni G."/>
            <person name="Azevedo V."/>
            <person name="Bertero M.G."/>
            <person name="Bessieres P."/>
            <person name="Bolotin A."/>
            <person name="Borchert S."/>
            <person name="Borriss R."/>
            <person name="Boursier L."/>
            <person name="Brans A."/>
            <person name="Braun M."/>
            <person name="Brignell S.C."/>
            <person name="Bron S."/>
            <person name="Brouillet S."/>
            <person name="Bruschi C.V."/>
            <person name="Caldwell B."/>
            <person name="Capuano V."/>
            <person name="Carter N.M."/>
            <person name="Choi S.-K."/>
            <person name="Codani J.-J."/>
            <person name="Connerton I.F."/>
            <person name="Cummings N.J."/>
            <person name="Daniel R.A."/>
            <person name="Denizot F."/>
            <person name="Devine K.M."/>
            <person name="Duesterhoeft A."/>
            <person name="Ehrlich S.D."/>
            <person name="Emmerson P.T."/>
            <person name="Entian K.-D."/>
            <person name="Errington J."/>
            <person name="Fabret C."/>
            <person name="Ferrari E."/>
            <person name="Foulger D."/>
            <person name="Fritz C."/>
            <person name="Fujita M."/>
            <person name="Fujita Y."/>
            <person name="Fuma S."/>
            <person name="Galizzi A."/>
            <person name="Galleron N."/>
            <person name="Ghim S.-Y."/>
            <person name="Glaser P."/>
            <person name="Goffeau A."/>
            <person name="Golightly E.J."/>
            <person name="Grandi G."/>
            <person name="Guiseppi G."/>
            <person name="Guy B.J."/>
            <person name="Haga K."/>
            <person name="Haiech J."/>
            <person name="Harwood C.R."/>
            <person name="Henaut A."/>
            <person name="Hilbert H."/>
            <person name="Holsappel S."/>
            <person name="Hosono S."/>
            <person name="Hullo M.-F."/>
            <person name="Itaya M."/>
            <person name="Jones L.-M."/>
            <person name="Joris B."/>
            <person name="Karamata D."/>
            <person name="Kasahara Y."/>
            <person name="Klaerr-Blanchard M."/>
            <person name="Klein C."/>
            <person name="Kobayashi Y."/>
            <person name="Koetter P."/>
            <person name="Koningstein G."/>
            <person name="Krogh S."/>
            <person name="Kumano M."/>
            <person name="Kurita K."/>
            <person name="Lapidus A."/>
            <person name="Lardinois S."/>
            <person name="Lauber J."/>
            <person name="Lazarevic V."/>
            <person name="Lee S.-M."/>
            <person name="Levine A."/>
            <person name="Liu H."/>
            <person name="Masuda S."/>
            <person name="Mauel C."/>
            <person name="Medigue C."/>
            <person name="Medina N."/>
            <person name="Mellado R.P."/>
            <person name="Mizuno M."/>
            <person name="Moestl D."/>
            <person name="Nakai S."/>
            <person name="Noback M."/>
            <person name="Noone D."/>
            <person name="O'Reilly M."/>
            <person name="Ogawa K."/>
            <person name="Ogiwara A."/>
            <person name="Oudega B."/>
            <person name="Park S.-H."/>
            <person name="Parro V."/>
            <person name="Pohl T.M."/>
            <person name="Portetelle D."/>
            <person name="Porwollik S."/>
            <person name="Prescott A.M."/>
            <person name="Presecan E."/>
            <person name="Pujic P."/>
            <person name="Purnelle B."/>
            <person name="Rapoport G."/>
            <person name="Rey M."/>
            <person name="Reynolds S."/>
            <person name="Rieger M."/>
            <person name="Rivolta C."/>
            <person name="Rocha E."/>
            <person name="Roche B."/>
            <person name="Rose M."/>
            <person name="Sadaie Y."/>
            <person name="Sato T."/>
            <person name="Scanlan E."/>
            <person name="Schleich S."/>
            <person name="Schroeter R."/>
            <person name="Scoffone F."/>
            <person name="Sekiguchi J."/>
            <person name="Sekowska A."/>
            <person name="Seror S.J."/>
            <person name="Serror P."/>
            <person name="Shin B.-S."/>
            <person name="Soldo B."/>
            <person name="Sorokin A."/>
            <person name="Tacconi E."/>
            <person name="Takagi T."/>
            <person name="Takahashi H."/>
            <person name="Takemaru K."/>
            <person name="Takeuchi M."/>
            <person name="Tamakoshi A."/>
            <person name="Tanaka T."/>
            <person name="Terpstra P."/>
            <person name="Tognoni A."/>
            <person name="Tosato V."/>
            <person name="Uchiyama S."/>
            <person name="Vandenbol M."/>
            <person name="Vannier F."/>
            <person name="Vassarotti A."/>
            <person name="Viari A."/>
            <person name="Wambutt R."/>
            <person name="Wedler E."/>
            <person name="Wedler H."/>
            <person name="Weitzenegger T."/>
            <person name="Winters P."/>
            <person name="Wipat A."/>
            <person name="Yamamoto H."/>
            <person name="Yamane K."/>
            <person name="Yasumoto K."/>
            <person name="Yata K."/>
            <person name="Yoshida K."/>
            <person name="Yoshikawa H.-F."/>
            <person name="Zumstein E."/>
            <person name="Yoshikawa H."/>
            <person name="Danchin A."/>
        </authorList>
    </citation>
    <scope>NUCLEOTIDE SEQUENCE [LARGE SCALE GENOMIC DNA]</scope>
    <source>
        <strain>168</strain>
    </source>
</reference>
<reference key="3">
    <citation type="journal article" date="2005" name="J. Bacteriol.">
        <title>Synergistic regulation of competence development in Bacillus subtilis by two Rap-Phr systems.</title>
        <authorList>
            <person name="Bongiorni C."/>
            <person name="Ishikawa S."/>
            <person name="Stephenson S."/>
            <person name="Ogasawara N."/>
            <person name="Perego M."/>
        </authorList>
    </citation>
    <scope>FUNCTION</scope>
    <scope>ACTIVITY REGULATION</scope>
    <scope>INTERACTION WITH COMA AND PHRF</scope>
    <scope>INDUCTION</scope>
    <source>
        <strain>168 / JH642</strain>
    </source>
</reference>
<reference key="4">
    <citation type="journal article" date="2006" name="J. Bacteriol.">
        <title>Modulation of the ComA-dependent quorum response in Bacillus subtilis by multiple Rap proteins and Phr peptides.</title>
        <authorList>
            <person name="Auchtung J.M."/>
            <person name="Lee C.A."/>
            <person name="Grossman A.D."/>
        </authorList>
    </citation>
    <scope>FUNCTION</scope>
    <scope>ACTIVITY REGULATION</scope>
    <scope>DISRUPTION PHENOTYPE</scope>
    <source>
        <strain>168 / JH642</strain>
    </source>
</reference>
<reference key="5">
    <citation type="journal article" date="2011" name="PLoS Biol.">
        <title>Structural basis of response regulator dephosphorylation by Rap phosphatases.</title>
        <authorList>
            <person name="Parashar V."/>
            <person name="Mirouze N."/>
            <person name="Dubnau D.A."/>
            <person name="Neiditch M.B."/>
        </authorList>
    </citation>
    <scope>MUTAGENESIS OF HIS-50</scope>
</reference>
<reference evidence="8" key="6">
    <citation type="journal article" date="2011" name="PLoS Biol.">
        <title>Structural basis of response regulator inhibition by a bacterial anti-activator protein.</title>
        <authorList>
            <person name="Baker M.D."/>
            <person name="Neiditch M.B."/>
        </authorList>
    </citation>
    <scope>X-RAY CRYSTALLOGRAPHY (2.30 ANGSTROMS) OF 2-381 IN COMPLEX WITH MANGANESE AND COMA DNA-BINDING DOMAIN</scope>
    <scope>FUNCTION</scope>
    <scope>ACTIVITY REGULATION</scope>
    <scope>SUBUNIT</scope>
    <scope>INTERACTION WITH COMA AND PHRF</scope>
    <scope>DOMAIN</scope>
    <scope>MUTAGENESIS OF PHE-24; PRO-27; ASP-28; LEU-67; GLU-71; GLN-78 AND ASP-194</scope>
</reference>
<reference evidence="9 10" key="7">
    <citation type="journal article" date="2013" name="PLoS Biol.">
        <title>Structural basis of Rap phosphatase inhibition by Phr peptides.</title>
        <authorList>
            <person name="Gallego del Sol F."/>
            <person name="Marina A."/>
        </authorList>
    </citation>
    <scope>X-RAY CRYSTALLOGRAPHY (2.40 ANGSTROMS) OF RAPF ALONE AND IN COMPLEX WITH PHRF</scope>
    <scope>FUNCTION</scope>
    <scope>ACTIVITY REGULATION</scope>
    <scope>INTERACTION WITH PHRF</scope>
    <scope>DOMAIN</scope>
    <scope>MUTAGENESIS OF ASP-194; ASN-227 AND GLU-303</scope>
</reference>
<keyword id="KW-0002">3D-structure</keyword>
<keyword id="KW-0178">Competence</keyword>
<keyword id="KW-0963">Cytoplasm</keyword>
<keyword id="KW-0464">Manganese</keyword>
<keyword id="KW-0479">Metal-binding</keyword>
<keyword id="KW-1185">Reference proteome</keyword>
<keyword id="KW-0677">Repeat</keyword>
<keyword id="KW-0802">TPR repeat</keyword>
<gene>
    <name type="primary">rapF</name>
    <name type="synonym">ywhJ</name>
    <name type="ordered locus">BSU37460</name>
</gene>
<sequence>MTGVISSSSIGEKINEWYMYIRRFSIPDAEYLRREIKQELDQMEEDQDLHLYYSLMEFRHNLMLEYLEPLEKMRIEEQPRLSDLLLEIDKKQARLTGLLEYYFNFFRGMYELDQREYLSAIKFFKKAESKLIFVKDRIEKAEFFFKMSESYYYMKQTYFSMDYARQAYEIYKEHEAYNIRLLQCHSLFATNFLDLKQYEDAISHFQKAYSMAEAEKQPQLMGRTLYNIGLCKNSQSQYEDAIPYFKRAIAVFEESNILPSLPQAYFLITQIHYKLGKIDKAHEYHSKGMAYSQKAGDVIYLSEFEFLKSLYLSGPDEEAIQGFFDFLESKMLYADLEDFAIDVAKYYHERKNFQKASAYFLKVEQVRQLIQGGVSLYEIEV</sequence>
<dbReference type="EMBL" id="Z80360">
    <property type="protein sequence ID" value="CAB02500.1"/>
    <property type="molecule type" value="Genomic_DNA"/>
</dbReference>
<dbReference type="EMBL" id="AL009126">
    <property type="protein sequence ID" value="CAB15773.1"/>
    <property type="molecule type" value="Genomic_DNA"/>
</dbReference>
<dbReference type="PIR" id="A69689">
    <property type="entry name" value="A69689"/>
</dbReference>
<dbReference type="RefSeq" id="NP_391626.1">
    <property type="nucleotide sequence ID" value="NC_000964.3"/>
</dbReference>
<dbReference type="RefSeq" id="WP_003227549.1">
    <property type="nucleotide sequence ID" value="NZ_OZ025638.1"/>
</dbReference>
<dbReference type="PDB" id="3ULQ">
    <property type="method" value="X-ray"/>
    <property type="resolution" value="2.30 A"/>
    <property type="chains" value="A=2-381"/>
</dbReference>
<dbReference type="PDB" id="4I9C">
    <property type="method" value="X-ray"/>
    <property type="resolution" value="3.10 A"/>
    <property type="chains" value="A=1-381"/>
</dbReference>
<dbReference type="PDB" id="4I9E">
    <property type="method" value="X-ray"/>
    <property type="resolution" value="2.40 A"/>
    <property type="chains" value="A/B=1-381"/>
</dbReference>
<dbReference type="PDBsum" id="3ULQ"/>
<dbReference type="PDBsum" id="4I9C"/>
<dbReference type="PDBsum" id="4I9E"/>
<dbReference type="SMR" id="P71002"/>
<dbReference type="DIP" id="DIP-59429N"/>
<dbReference type="FunCoup" id="P71002">
    <property type="interactions" value="63"/>
</dbReference>
<dbReference type="IntAct" id="P71002">
    <property type="interactions" value="2"/>
</dbReference>
<dbReference type="STRING" id="224308.BSU37460"/>
<dbReference type="PaxDb" id="224308-BSU37460"/>
<dbReference type="EnsemblBacteria" id="CAB15773">
    <property type="protein sequence ID" value="CAB15773"/>
    <property type="gene ID" value="BSU_37460"/>
</dbReference>
<dbReference type="GeneID" id="936725"/>
<dbReference type="KEGG" id="bsu:BSU37460"/>
<dbReference type="PATRIC" id="fig|224308.179.peg.4057"/>
<dbReference type="eggNOG" id="COG0457">
    <property type="taxonomic scope" value="Bacteria"/>
</dbReference>
<dbReference type="InParanoid" id="P71002"/>
<dbReference type="OrthoDB" id="2957368at2"/>
<dbReference type="PhylomeDB" id="P71002"/>
<dbReference type="BioCyc" id="BSUB:BSU37460-MONOMER"/>
<dbReference type="EvolutionaryTrace" id="P71002"/>
<dbReference type="Proteomes" id="UP000001570">
    <property type="component" value="Chromosome"/>
</dbReference>
<dbReference type="GO" id="GO:0005737">
    <property type="term" value="C:cytoplasm"/>
    <property type="evidence" value="ECO:0007669"/>
    <property type="project" value="UniProtKB-SubCell"/>
</dbReference>
<dbReference type="GO" id="GO:0046872">
    <property type="term" value="F:metal ion binding"/>
    <property type="evidence" value="ECO:0007669"/>
    <property type="project" value="UniProtKB-KW"/>
</dbReference>
<dbReference type="GO" id="GO:0030420">
    <property type="term" value="P:establishment of competence for transformation"/>
    <property type="evidence" value="ECO:0007669"/>
    <property type="project" value="UniProtKB-KW"/>
</dbReference>
<dbReference type="Gene3D" id="1.25.40.10">
    <property type="entry name" value="Tetratricopeptide repeat domain"/>
    <property type="match status" value="1"/>
</dbReference>
<dbReference type="InterPro" id="IPR011990">
    <property type="entry name" value="TPR-like_helical_dom_sf"/>
</dbReference>
<dbReference type="InterPro" id="IPR019734">
    <property type="entry name" value="TPR_rpt"/>
</dbReference>
<dbReference type="PANTHER" id="PTHR10098">
    <property type="entry name" value="RAPSYN-RELATED"/>
    <property type="match status" value="1"/>
</dbReference>
<dbReference type="PANTHER" id="PTHR10098:SF108">
    <property type="entry name" value="TETRATRICOPEPTIDE REPEAT PROTEIN 28"/>
    <property type="match status" value="1"/>
</dbReference>
<dbReference type="Pfam" id="PF12895">
    <property type="entry name" value="ANAPC3"/>
    <property type="match status" value="1"/>
</dbReference>
<dbReference type="Pfam" id="PF18801">
    <property type="entry name" value="RapH_N"/>
    <property type="match status" value="1"/>
</dbReference>
<dbReference type="Pfam" id="PF13424">
    <property type="entry name" value="TPR_12"/>
    <property type="match status" value="1"/>
</dbReference>
<dbReference type="SMART" id="SM00028">
    <property type="entry name" value="TPR"/>
    <property type="match status" value="4"/>
</dbReference>
<dbReference type="SUPFAM" id="SSF48452">
    <property type="entry name" value="TPR-like"/>
    <property type="match status" value="1"/>
</dbReference>
<dbReference type="PROSITE" id="PS50005">
    <property type="entry name" value="TPR"/>
    <property type="match status" value="4"/>
</dbReference>
<dbReference type="PROSITE" id="PS50293">
    <property type="entry name" value="TPR_REGION"/>
    <property type="match status" value="1"/>
</dbReference>
<organism>
    <name type="scientific">Bacillus subtilis (strain 168)</name>
    <dbReference type="NCBI Taxonomy" id="224308"/>
    <lineage>
        <taxon>Bacteria</taxon>
        <taxon>Bacillati</taxon>
        <taxon>Bacillota</taxon>
        <taxon>Bacilli</taxon>
        <taxon>Bacillales</taxon>
        <taxon>Bacillaceae</taxon>
        <taxon>Bacillus</taxon>
    </lineage>
</organism>